<feature type="chain" id="PRO_0000069719" description="Melanocortin receptor 3">
    <location>
        <begin position="1"/>
        <end position="323"/>
    </location>
</feature>
<feature type="topological domain" description="Extracellular" evidence="1">
    <location>
        <begin position="1"/>
        <end position="37"/>
    </location>
</feature>
<feature type="transmembrane region" description="Helical; Name=1" evidence="1">
    <location>
        <begin position="38"/>
        <end position="63"/>
    </location>
</feature>
<feature type="topological domain" description="Cytoplasmic" evidence="1">
    <location>
        <begin position="64"/>
        <end position="75"/>
    </location>
</feature>
<feature type="transmembrane region" description="Helical; Name=2" evidence="1">
    <location>
        <begin position="76"/>
        <end position="100"/>
    </location>
</feature>
<feature type="topological domain" description="Extracellular" evidence="1">
    <location>
        <begin position="101"/>
        <end position="118"/>
    </location>
</feature>
<feature type="transmembrane region" description="Helical; Name=3" evidence="1">
    <location>
        <begin position="119"/>
        <end position="140"/>
    </location>
</feature>
<feature type="topological domain" description="Cytoplasmic" evidence="1">
    <location>
        <begin position="141"/>
        <end position="160"/>
    </location>
</feature>
<feature type="transmembrane region" description="Helical; Name=4" evidence="1">
    <location>
        <begin position="161"/>
        <end position="181"/>
    </location>
</feature>
<feature type="topological domain" description="Extracellular" evidence="1">
    <location>
        <begin position="182"/>
        <end position="186"/>
    </location>
</feature>
<feature type="transmembrane region" description="Helical; Name=5" evidence="1">
    <location>
        <begin position="187"/>
        <end position="210"/>
    </location>
</feature>
<feature type="topological domain" description="Cytoplasmic" evidence="1">
    <location>
        <begin position="211"/>
        <end position="245"/>
    </location>
</feature>
<feature type="transmembrane region" description="Helical; Name=6" evidence="1">
    <location>
        <begin position="246"/>
        <end position="268"/>
    </location>
</feature>
<feature type="topological domain" description="Extracellular" evidence="1">
    <location>
        <begin position="269"/>
        <end position="277"/>
    </location>
</feature>
<feature type="transmembrane region" description="Helical; Name=7" evidence="1">
    <location>
        <begin position="278"/>
        <end position="301"/>
    </location>
</feature>
<feature type="topological domain" description="Cytoplasmic" evidence="1">
    <location>
        <begin position="302"/>
        <end position="323"/>
    </location>
</feature>
<feature type="lipid moiety-binding region" description="S-palmitoyl cysteine" evidence="1">
    <location>
        <position position="315"/>
    </location>
</feature>
<feature type="glycosylation site" description="N-linked (GlcNAc...) asparagine" evidence="1">
    <location>
        <position position="2"/>
    </location>
</feature>
<feature type="glycosylation site" description="N-linked (GlcNAc...) asparagine" evidence="1">
    <location>
        <position position="16"/>
    </location>
</feature>
<feature type="glycosylation site" description="N-linked (GlcNAc...) asparagine" evidence="1">
    <location>
        <position position="28"/>
    </location>
</feature>
<comment type="function">
    <text evidence="3">Receptor for MSH (alpha, beta and gamma) and ACTH. This receptor is mediated by G proteins which activate adenylate cyclase. Required for expression of anticipatory patterns of activity and wakefulness during periods of limited nutrient availability and for the normal regulation of circadian clock activity in the brain (PubMed:19036988).</text>
</comment>
<comment type="subcellular location">
    <subcellularLocation>
        <location>Cell membrane</location>
        <topology>Multi-pass membrane protein</topology>
    </subcellularLocation>
</comment>
<comment type="tissue specificity">
    <text>Brain.</text>
</comment>
<comment type="similarity">
    <text evidence="2">Belongs to the G-protein coupled receptor 1 family.</text>
</comment>
<organism>
    <name type="scientific">Mus musculus</name>
    <name type="common">Mouse</name>
    <dbReference type="NCBI Taxonomy" id="10090"/>
    <lineage>
        <taxon>Eukaryota</taxon>
        <taxon>Metazoa</taxon>
        <taxon>Chordata</taxon>
        <taxon>Craniata</taxon>
        <taxon>Vertebrata</taxon>
        <taxon>Euteleostomi</taxon>
        <taxon>Mammalia</taxon>
        <taxon>Eutheria</taxon>
        <taxon>Euarchontoglires</taxon>
        <taxon>Glires</taxon>
        <taxon>Rodentia</taxon>
        <taxon>Myomorpha</taxon>
        <taxon>Muroidea</taxon>
        <taxon>Muridae</taxon>
        <taxon>Murinae</taxon>
        <taxon>Mus</taxon>
        <taxon>Mus</taxon>
    </lineage>
</organism>
<reference key="1">
    <citation type="journal article" date="1994" name="Biochem. J.">
        <title>Molecular cloning, functional expression and pharmacological characterization of a mouse melanocortin receptor gene.</title>
        <authorList>
            <person name="Desarnaud F."/>
            <person name="Labbe O."/>
            <person name="Eggerickx D."/>
            <person name="Vassart G."/>
            <person name="Parmentier M."/>
        </authorList>
    </citation>
    <scope>NUCLEOTIDE SEQUENCE [GENOMIC DNA]</scope>
</reference>
<reference key="2">
    <citation type="journal article" date="2008" name="J. Neurosci.">
        <title>The melanocortin-3 receptor is required for entrainment to meal intake.</title>
        <authorList>
            <person name="Sutton G.M."/>
            <person name="Perez-Tilve D."/>
            <person name="Nogueiras R."/>
            <person name="Fang J."/>
            <person name="Kim J.K."/>
            <person name="Cone R.D."/>
            <person name="Gimble J.M."/>
            <person name="Tschop M.H."/>
            <person name="Butler A.A."/>
        </authorList>
    </citation>
    <scope>FUNCTION</scope>
</reference>
<accession>P33033</accession>
<evidence type="ECO:0000255" key="1"/>
<evidence type="ECO:0000255" key="2">
    <source>
        <dbReference type="PROSITE-ProRule" id="PRU00521"/>
    </source>
</evidence>
<evidence type="ECO:0000269" key="3">
    <source>
    </source>
</evidence>
<dbReference type="EMBL" id="X74983">
    <property type="protein sequence ID" value="CAA52918.1"/>
    <property type="molecule type" value="Genomic_DNA"/>
</dbReference>
<dbReference type="CCDS" id="CCDS17127.1"/>
<dbReference type="PIR" id="S43850">
    <property type="entry name" value="S43850"/>
</dbReference>
<dbReference type="RefSeq" id="NP_032587.1">
    <property type="nucleotide sequence ID" value="NM_008561.3"/>
</dbReference>
<dbReference type="SMR" id="P33033"/>
<dbReference type="BioGRID" id="201340">
    <property type="interactions" value="1"/>
</dbReference>
<dbReference type="CORUM" id="P33033"/>
<dbReference type="FunCoup" id="P33033">
    <property type="interactions" value="426"/>
</dbReference>
<dbReference type="STRING" id="10090.ENSMUSP00000047358"/>
<dbReference type="BindingDB" id="P33033"/>
<dbReference type="ChEMBL" id="CHEMBL4774"/>
<dbReference type="DrugCentral" id="P33033"/>
<dbReference type="GuidetoPHARMACOLOGY" id="284"/>
<dbReference type="GlyCosmos" id="P33033">
    <property type="glycosylation" value="3 sites, No reported glycans"/>
</dbReference>
<dbReference type="GlyGen" id="P33033">
    <property type="glycosylation" value="3 sites"/>
</dbReference>
<dbReference type="PaxDb" id="10090-ENSMUSP00000047358"/>
<dbReference type="Antibodypedia" id="2935">
    <property type="antibodies" value="348 antibodies from 37 providers"/>
</dbReference>
<dbReference type="DNASU" id="17201"/>
<dbReference type="Ensembl" id="ENSMUST00000038532.2">
    <property type="protein sequence ID" value="ENSMUSP00000047358.2"/>
    <property type="gene ID" value="ENSMUSG00000038537.2"/>
</dbReference>
<dbReference type="GeneID" id="17201"/>
<dbReference type="KEGG" id="mmu:17201"/>
<dbReference type="UCSC" id="uc008ocl.1">
    <property type="organism name" value="mouse"/>
</dbReference>
<dbReference type="AGR" id="MGI:96929"/>
<dbReference type="CTD" id="4159"/>
<dbReference type="MGI" id="MGI:96929">
    <property type="gene designation" value="Mc3r"/>
</dbReference>
<dbReference type="VEuPathDB" id="HostDB:ENSMUSG00000038537"/>
<dbReference type="eggNOG" id="KOG3656">
    <property type="taxonomic scope" value="Eukaryota"/>
</dbReference>
<dbReference type="GeneTree" id="ENSGT01120000271819"/>
<dbReference type="HOGENOM" id="CLU_009579_13_0_1"/>
<dbReference type="InParanoid" id="P33033"/>
<dbReference type="OMA" id="KEIVCCC"/>
<dbReference type="OrthoDB" id="5970330at2759"/>
<dbReference type="PhylomeDB" id="P33033"/>
<dbReference type="TreeFam" id="TF332646"/>
<dbReference type="Reactome" id="R-MMU-375276">
    <property type="pathway name" value="Peptide ligand-binding receptors"/>
</dbReference>
<dbReference type="Reactome" id="R-MMU-418555">
    <property type="pathway name" value="G alpha (s) signalling events"/>
</dbReference>
<dbReference type="BioGRID-ORCS" id="17201">
    <property type="hits" value="2 hits in 78 CRISPR screens"/>
</dbReference>
<dbReference type="PRO" id="PR:P33033"/>
<dbReference type="Proteomes" id="UP000000589">
    <property type="component" value="Chromosome 2"/>
</dbReference>
<dbReference type="RNAct" id="P33033">
    <property type="molecule type" value="protein"/>
</dbReference>
<dbReference type="Bgee" id="ENSMUSG00000038537">
    <property type="expression patterns" value="Expressed in epiblast cell in embryo and 23 other cell types or tissues"/>
</dbReference>
<dbReference type="ExpressionAtlas" id="P33033">
    <property type="expression patterns" value="baseline and differential"/>
</dbReference>
<dbReference type="GO" id="GO:0005886">
    <property type="term" value="C:plasma membrane"/>
    <property type="evidence" value="ECO:0007669"/>
    <property type="project" value="UniProtKB-SubCell"/>
</dbReference>
<dbReference type="GO" id="GO:0004980">
    <property type="term" value="F:melanocyte-stimulating hormone receptor activity"/>
    <property type="evidence" value="ECO:0000314"/>
    <property type="project" value="MGI"/>
</dbReference>
<dbReference type="GO" id="GO:0042923">
    <property type="term" value="F:neuropeptide binding"/>
    <property type="evidence" value="ECO:0007669"/>
    <property type="project" value="Ensembl"/>
</dbReference>
<dbReference type="GO" id="GO:0017046">
    <property type="term" value="F:peptide hormone binding"/>
    <property type="evidence" value="ECO:0007669"/>
    <property type="project" value="Ensembl"/>
</dbReference>
<dbReference type="GO" id="GO:0007189">
    <property type="term" value="P:adenylate cyclase-activating G protein-coupled receptor signaling pathway"/>
    <property type="evidence" value="ECO:0007669"/>
    <property type="project" value="Ensembl"/>
</dbReference>
<dbReference type="GO" id="GO:0032922">
    <property type="term" value="P:circadian regulation of gene expression"/>
    <property type="evidence" value="ECO:0000315"/>
    <property type="project" value="UniProtKB"/>
</dbReference>
<dbReference type="GO" id="GO:0042309">
    <property type="term" value="P:homoiothermy"/>
    <property type="evidence" value="ECO:0007669"/>
    <property type="project" value="Ensembl"/>
</dbReference>
<dbReference type="GO" id="GO:0045475">
    <property type="term" value="P:locomotor rhythm"/>
    <property type="evidence" value="ECO:0000315"/>
    <property type="project" value="UniProtKB"/>
</dbReference>
<dbReference type="GO" id="GO:0008217">
    <property type="term" value="P:regulation of blood pressure"/>
    <property type="evidence" value="ECO:0007669"/>
    <property type="project" value="Ensembl"/>
</dbReference>
<dbReference type="GO" id="GO:0060259">
    <property type="term" value="P:regulation of feeding behavior"/>
    <property type="evidence" value="ECO:0000315"/>
    <property type="project" value="UniProtKB"/>
</dbReference>
<dbReference type="GO" id="GO:0002027">
    <property type="term" value="P:regulation of heart rate"/>
    <property type="evidence" value="ECO:0007669"/>
    <property type="project" value="Ensembl"/>
</dbReference>
<dbReference type="GO" id="GO:0055078">
    <property type="term" value="P:sodium ion homeostasis"/>
    <property type="evidence" value="ECO:0007669"/>
    <property type="project" value="Ensembl"/>
</dbReference>
<dbReference type="CDD" id="cd15352">
    <property type="entry name" value="7tmA_MC3R"/>
    <property type="match status" value="1"/>
</dbReference>
<dbReference type="FunFam" id="1.20.1070.10:FF:000077">
    <property type="entry name" value="Melanocortin receptor 4"/>
    <property type="match status" value="1"/>
</dbReference>
<dbReference type="Gene3D" id="1.20.1070.10">
    <property type="entry name" value="Rhodopsin 7-helix transmembrane proteins"/>
    <property type="match status" value="1"/>
</dbReference>
<dbReference type="InterPro" id="IPR000276">
    <property type="entry name" value="GPCR_Rhodpsn"/>
</dbReference>
<dbReference type="InterPro" id="IPR017452">
    <property type="entry name" value="GPCR_Rhodpsn_7TM"/>
</dbReference>
<dbReference type="InterPro" id="IPR001908">
    <property type="entry name" value="MC3-5R"/>
</dbReference>
<dbReference type="InterPro" id="IPR002122">
    <property type="entry name" value="Mcort_3_rcpt"/>
</dbReference>
<dbReference type="InterPro" id="IPR001671">
    <property type="entry name" value="Melcrt_ACTH_rcpt"/>
</dbReference>
<dbReference type="PANTHER" id="PTHR22750">
    <property type="entry name" value="G-PROTEIN COUPLED RECEPTOR"/>
    <property type="match status" value="1"/>
</dbReference>
<dbReference type="Pfam" id="PF00001">
    <property type="entry name" value="7tm_1"/>
    <property type="match status" value="1"/>
</dbReference>
<dbReference type="PRINTS" id="PR00237">
    <property type="entry name" value="GPCRRHODOPSN"/>
</dbReference>
<dbReference type="PRINTS" id="PR00534">
    <property type="entry name" value="MCRFAMILY"/>
</dbReference>
<dbReference type="PRINTS" id="PR00535">
    <property type="entry name" value="MELNOCORTINR"/>
</dbReference>
<dbReference type="PRINTS" id="PR01061">
    <property type="entry name" value="MELNOCORTN3R"/>
</dbReference>
<dbReference type="SMART" id="SM01381">
    <property type="entry name" value="7TM_GPCR_Srsx"/>
    <property type="match status" value="1"/>
</dbReference>
<dbReference type="SUPFAM" id="SSF81321">
    <property type="entry name" value="Family A G protein-coupled receptor-like"/>
    <property type="match status" value="1"/>
</dbReference>
<dbReference type="PROSITE" id="PS00237">
    <property type="entry name" value="G_PROTEIN_RECEP_F1_1"/>
    <property type="match status" value="1"/>
</dbReference>
<dbReference type="PROSITE" id="PS50262">
    <property type="entry name" value="G_PROTEIN_RECEP_F1_2"/>
    <property type="match status" value="1"/>
</dbReference>
<protein>
    <recommendedName>
        <fullName>Melanocortin receptor 3</fullName>
        <shortName>MC3-R</shortName>
    </recommendedName>
</protein>
<proteinExistence type="evidence at transcript level"/>
<gene>
    <name type="primary">Mc3r</name>
</gene>
<sequence>MNSSCCLSSVSPMLPNLSEHPAAPPASNRSGSGFCEQVFIKPEVFLALGIVSLMENILVILAVVRNGNLHSPMYFFLCSLAAADMLVSLSNSLETIMIAVINSDSLTLEDQFIQHMDNIFDSMICISLVASICNLLAIAIDRYVTIFYALRYHSIMTVRKALTLIGVIWVCCGICGVMFIIYSESKMVIVCLITMFFAMVLLMGTLYIHMFLFARLHVQRIAVLPPAGVVAPQQHSCMKGAVTITILLGVFIFCWAPFFLHLVLIITCPTNPYCICYTAHFNTYLVLIMCNSVIDPLIYAFRSLELRNTFKEILCGCNSMNLG</sequence>
<keyword id="KW-0090">Biological rhythms</keyword>
<keyword id="KW-1003">Cell membrane</keyword>
<keyword id="KW-0297">G-protein coupled receptor</keyword>
<keyword id="KW-0325">Glycoprotein</keyword>
<keyword id="KW-0449">Lipoprotein</keyword>
<keyword id="KW-0472">Membrane</keyword>
<keyword id="KW-0564">Palmitate</keyword>
<keyword id="KW-0675">Receptor</keyword>
<keyword id="KW-1185">Reference proteome</keyword>
<keyword id="KW-0807">Transducer</keyword>
<keyword id="KW-0812">Transmembrane</keyword>
<keyword id="KW-1133">Transmembrane helix</keyword>
<name>MC3R_MOUSE</name>